<keyword id="KW-0085">Behavior</keyword>
<keyword id="KW-1185">Reference proteome</keyword>
<keyword id="KW-0964">Secreted</keyword>
<keyword id="KW-0732">Signal</keyword>
<feature type="signal peptide" evidence="1">
    <location>
        <begin position="1"/>
        <end position="21"/>
    </location>
</feature>
<feature type="chain" id="PRO_0000021760" description="Accessory gland-specific peptide 26Ab">
    <location>
        <begin position="22"/>
        <end position="90"/>
    </location>
</feature>
<feature type="sequence variant" description="In strain: 11, 35, 7725 and Robertson." evidence="2">
    <original>A</original>
    <variation>D</variation>
    <location>
        <position position="21"/>
    </location>
</feature>
<feature type="sequence variant" description="In strain: Praslin." evidence="2">
    <original>S</original>
    <variation>I</variation>
    <location>
        <position position="26"/>
    </location>
</feature>
<accession>P33739</accession>
<accession>B4I1L4</accession>
<accession>Q6EAS0</accession>
<accession>Q6RCA8</accession>
<accession>Q6RCB1</accession>
<protein>
    <recommendedName>
        <fullName>Accessory gland-specific peptide 26Ab</fullName>
    </recommendedName>
    <alternativeName>
        <fullName>Male accessory gland secretory protein 355B</fullName>
    </alternativeName>
</protein>
<reference key="1">
    <citation type="journal article" date="1992" name="Genetics">
        <title>Polymorphism and divergence in the Mst26A male accessory gland gene region in Drosophila.</title>
        <authorList>
            <person name="Aguade M."/>
            <person name="Miyashita N."/>
            <person name="Langley C.H."/>
        </authorList>
    </citation>
    <scope>NUCLEOTIDE SEQUENCE [GENOMIC DNA]</scope>
    <scope>VARIANTS ASP-21 AND ILE-26</scope>
</reference>
<reference key="2">
    <citation type="journal article" date="2004" name="Genetics">
        <title>Molecular population genetics of male accessory gland proteins in the Drosophila simulans complex.</title>
        <authorList>
            <person name="Kern A.D."/>
            <person name="Jones C.D."/>
            <person name="Begun D.J."/>
        </authorList>
    </citation>
    <scope>NUCLEOTIDE SEQUENCE [GENOMIC DNA]</scope>
    <source>
        <strain>01</strain>
        <strain>07</strain>
        <strain>11</strain>
        <strain>33</strain>
        <strain>34</strain>
        <strain>35</strain>
        <strain>7725</strain>
        <strain>Praslin</strain>
        <strain>Robertson</strain>
    </source>
</reference>
<reference key="3">
    <citation type="journal article" date="2007" name="Nature">
        <title>Evolution of genes and genomes on the Drosophila phylogeny.</title>
        <authorList>
            <consortium name="Drosophila 12 genomes consortium"/>
        </authorList>
    </citation>
    <scope>NUCLEOTIDE SEQUENCE [LARGE SCALE GENOMIC DNA]</scope>
    <source>
        <strain>Rob3c / Tucson 14021-0248.25</strain>
    </source>
</reference>
<evidence type="ECO:0000255" key="1"/>
<evidence type="ECO:0000269" key="2">
    <source>
    </source>
</evidence>
<organism>
    <name type="scientific">Drosophila sechellia</name>
    <name type="common">Fruit fly</name>
    <dbReference type="NCBI Taxonomy" id="7238"/>
    <lineage>
        <taxon>Eukaryota</taxon>
        <taxon>Metazoa</taxon>
        <taxon>Ecdysozoa</taxon>
        <taxon>Arthropoda</taxon>
        <taxon>Hexapoda</taxon>
        <taxon>Insecta</taxon>
        <taxon>Pterygota</taxon>
        <taxon>Neoptera</taxon>
        <taxon>Endopterygota</taxon>
        <taxon>Diptera</taxon>
        <taxon>Brachycera</taxon>
        <taxon>Muscomorpha</taxon>
        <taxon>Ephydroidea</taxon>
        <taxon>Drosophilidae</taxon>
        <taxon>Drosophila</taxon>
        <taxon>Sophophora</taxon>
    </lineage>
</organism>
<gene>
    <name type="primary">Acp26Ab</name>
    <name type="synonym">Mst26Ab</name>
    <name type="synonym">mst355B</name>
    <name type="ORF">GM17991</name>
</gene>
<name>MS2B_DROSE</name>
<comment type="function">
    <text>This protein is transferred from male to female during mating and may affect egglaying and behavior after mating.</text>
</comment>
<comment type="subcellular location">
    <subcellularLocation>
        <location>Secreted</location>
        <location>Extracellular space</location>
    </subcellularLocation>
</comment>
<comment type="tissue specificity">
    <text>Main cells of the accessory glands of males.</text>
</comment>
<sequence length="90" mass="10270">MNYFAVLCIFSCICLWQFSDAAPFISVQSSSQSRSQKVMNGMLRTLYDYSVQDSVNDATGHLIHTHKSNFNSDVMSPEEIERVRQQLNMA</sequence>
<dbReference type="EMBL" id="X72630">
    <property type="protein sequence ID" value="CAA51207.1"/>
    <property type="molecule type" value="Genomic_DNA"/>
</dbReference>
<dbReference type="EMBL" id="AY505193">
    <property type="protein sequence ID" value="AAS99371.1"/>
    <property type="molecule type" value="Genomic_DNA"/>
</dbReference>
<dbReference type="EMBL" id="AY505194">
    <property type="protein sequence ID" value="AAS99372.1"/>
    <property type="molecule type" value="Genomic_DNA"/>
</dbReference>
<dbReference type="EMBL" id="AY505195">
    <property type="protein sequence ID" value="AAS99373.1"/>
    <property type="molecule type" value="Genomic_DNA"/>
</dbReference>
<dbReference type="EMBL" id="AY505196">
    <property type="protein sequence ID" value="AAS99374.1"/>
    <property type="molecule type" value="Genomic_DNA"/>
</dbReference>
<dbReference type="EMBL" id="AY505197">
    <property type="protein sequence ID" value="AAS99375.1"/>
    <property type="molecule type" value="Genomic_DNA"/>
</dbReference>
<dbReference type="EMBL" id="AY505198">
    <property type="protein sequence ID" value="AAS99376.1"/>
    <property type="molecule type" value="Genomic_DNA"/>
</dbReference>
<dbReference type="EMBL" id="AY505199">
    <property type="protein sequence ID" value="AAS99377.1"/>
    <property type="molecule type" value="Genomic_DNA"/>
</dbReference>
<dbReference type="EMBL" id="AY505200">
    <property type="protein sequence ID" value="AAS99378.1"/>
    <property type="molecule type" value="Genomic_DNA"/>
</dbReference>
<dbReference type="EMBL" id="AY505201">
    <property type="protein sequence ID" value="AAS99379.1"/>
    <property type="molecule type" value="Genomic_DNA"/>
</dbReference>
<dbReference type="EMBL" id="CH480820">
    <property type="protein sequence ID" value="EDW54421.1"/>
    <property type="molecule type" value="Genomic_DNA"/>
</dbReference>
<dbReference type="STRING" id="7238.P33739"/>
<dbReference type="EnsemblMetazoa" id="FBtr0200976">
    <property type="protein sequence ID" value="FBpp0199468"/>
    <property type="gene ID" value="FBgn0260791"/>
</dbReference>
<dbReference type="EnsemblMetazoa" id="XM_002037967.2">
    <property type="protein sequence ID" value="XP_002038003.1"/>
    <property type="gene ID" value="LOC6613535"/>
</dbReference>
<dbReference type="GeneID" id="6613535"/>
<dbReference type="KEGG" id="dse:6613535"/>
<dbReference type="CTD" id="33816"/>
<dbReference type="HOGENOM" id="CLU_187897_0_0_1"/>
<dbReference type="OMA" id="CTICLWR"/>
<dbReference type="OrthoDB" id="59892at7215"/>
<dbReference type="PhylomeDB" id="P33739"/>
<dbReference type="Proteomes" id="UP000001292">
    <property type="component" value="Unassembled WGS sequence"/>
</dbReference>
<dbReference type="GO" id="GO:0005576">
    <property type="term" value="C:extracellular region"/>
    <property type="evidence" value="ECO:0007669"/>
    <property type="project" value="UniProtKB-SubCell"/>
</dbReference>
<dbReference type="GO" id="GO:0007617">
    <property type="term" value="P:mating behavior"/>
    <property type="evidence" value="ECO:0007669"/>
    <property type="project" value="InterPro"/>
</dbReference>
<dbReference type="GO" id="GO:0019953">
    <property type="term" value="P:sexual reproduction"/>
    <property type="evidence" value="ECO:0007669"/>
    <property type="project" value="EnsemblMetazoa"/>
</dbReference>
<dbReference type="InterPro" id="IPR008392">
    <property type="entry name" value="Acp26Ab"/>
</dbReference>
<dbReference type="Pfam" id="PF05777">
    <property type="entry name" value="Acp26Ab"/>
    <property type="match status" value="1"/>
</dbReference>
<proteinExistence type="evidence at transcript level"/>